<sequence>MSNRVIIFDTTLRDGEQALAASLTVKEKLQIALSLERLGVDVMEVGFPVSSPGDFESVQTIARTIKNSRVCALARALEKDIDAAAQSLSVAEQFRIHTFISTSTIHVESKLKRSFDQVLDMAVGAVKYARRFTDDVEFSCEDAGRTPIDNLCRMVEAAIKAGAKTINIPDTVGYTVPSEFGGIIQNLFDRVPNIDQAVISVHCHDDLGLSVANSITAVQHGARQIECTVNGIGERAGNCSLEEIAMIIATRKASLGLETGINAKEIHRTSNLVSQLCNMPVQANKAIVGANAFTHSSGIHQDGVLKSQNTYEIMTPESIGLNRNNLNMTSRSGRHVIKHRMEEMGYGEQDYDMDTLYEAFLKLADKKGQVFDYDLEALVYVEAQAEDENHYGLQQLVVHSDSTQGQATATVTLSIDGKAVTEAATGNGPVDAAYKAIARASGCEINISSYQLSAKGQGQDALGQVDITAKYHDQSFHGVGLATDVVEASAAALIHVMNLTWRADKVAENKHKLKQARTELGGV</sequence>
<reference key="1">
    <citation type="submission" date="2007-03" db="EMBL/GenBank/DDBJ databases">
        <title>Complete sequence of Shewanella loihica PV-4.</title>
        <authorList>
            <consortium name="US DOE Joint Genome Institute"/>
            <person name="Copeland A."/>
            <person name="Lucas S."/>
            <person name="Lapidus A."/>
            <person name="Barry K."/>
            <person name="Detter J.C."/>
            <person name="Glavina del Rio T."/>
            <person name="Hammon N."/>
            <person name="Israni S."/>
            <person name="Dalin E."/>
            <person name="Tice H."/>
            <person name="Pitluck S."/>
            <person name="Chain P."/>
            <person name="Malfatti S."/>
            <person name="Shin M."/>
            <person name="Vergez L."/>
            <person name="Schmutz J."/>
            <person name="Larimer F."/>
            <person name="Land M."/>
            <person name="Hauser L."/>
            <person name="Kyrpides N."/>
            <person name="Mikhailova N."/>
            <person name="Romine M.F."/>
            <person name="Serres G."/>
            <person name="Fredrickson J."/>
            <person name="Tiedje J."/>
            <person name="Richardson P."/>
        </authorList>
    </citation>
    <scope>NUCLEOTIDE SEQUENCE [LARGE SCALE GENOMIC DNA]</scope>
    <source>
        <strain>ATCC BAA-1088 / PV-4</strain>
    </source>
</reference>
<keyword id="KW-0028">Amino-acid biosynthesis</keyword>
<keyword id="KW-0100">Branched-chain amino acid biosynthesis</keyword>
<keyword id="KW-0963">Cytoplasm</keyword>
<keyword id="KW-0432">Leucine biosynthesis</keyword>
<keyword id="KW-0464">Manganese</keyword>
<keyword id="KW-0479">Metal-binding</keyword>
<keyword id="KW-1185">Reference proteome</keyword>
<keyword id="KW-0808">Transferase</keyword>
<comment type="function">
    <text evidence="1">Catalyzes the condensation of the acetyl group of acetyl-CoA with 3-methyl-2-oxobutanoate (2-ketoisovalerate) to form 3-carboxy-3-hydroxy-4-methylpentanoate (2-isopropylmalate).</text>
</comment>
<comment type="catalytic activity">
    <reaction evidence="1">
        <text>3-methyl-2-oxobutanoate + acetyl-CoA + H2O = (2S)-2-isopropylmalate + CoA + H(+)</text>
        <dbReference type="Rhea" id="RHEA:21524"/>
        <dbReference type="ChEBI" id="CHEBI:1178"/>
        <dbReference type="ChEBI" id="CHEBI:11851"/>
        <dbReference type="ChEBI" id="CHEBI:15377"/>
        <dbReference type="ChEBI" id="CHEBI:15378"/>
        <dbReference type="ChEBI" id="CHEBI:57287"/>
        <dbReference type="ChEBI" id="CHEBI:57288"/>
        <dbReference type="EC" id="2.3.3.13"/>
    </reaction>
</comment>
<comment type="cofactor">
    <cofactor evidence="1">
        <name>Mn(2+)</name>
        <dbReference type="ChEBI" id="CHEBI:29035"/>
    </cofactor>
</comment>
<comment type="pathway">
    <text evidence="1">Amino-acid biosynthesis; L-leucine biosynthesis; L-leucine from 3-methyl-2-oxobutanoate: step 1/4.</text>
</comment>
<comment type="subunit">
    <text evidence="1">Homodimer.</text>
</comment>
<comment type="subcellular location">
    <subcellularLocation>
        <location evidence="1">Cytoplasm</location>
    </subcellularLocation>
</comment>
<comment type="similarity">
    <text evidence="1">Belongs to the alpha-IPM synthase/homocitrate synthase family. LeuA type 1 subfamily.</text>
</comment>
<proteinExistence type="inferred from homology"/>
<gene>
    <name evidence="1" type="primary">leuA</name>
    <name type="ordered locus">Shew_3472</name>
</gene>
<evidence type="ECO:0000255" key="1">
    <source>
        <dbReference type="HAMAP-Rule" id="MF_01025"/>
    </source>
</evidence>
<organism>
    <name type="scientific">Shewanella loihica (strain ATCC BAA-1088 / PV-4)</name>
    <dbReference type="NCBI Taxonomy" id="323850"/>
    <lineage>
        <taxon>Bacteria</taxon>
        <taxon>Pseudomonadati</taxon>
        <taxon>Pseudomonadota</taxon>
        <taxon>Gammaproteobacteria</taxon>
        <taxon>Alteromonadales</taxon>
        <taxon>Shewanellaceae</taxon>
        <taxon>Shewanella</taxon>
    </lineage>
</organism>
<name>LEU1_SHELP</name>
<protein>
    <recommendedName>
        <fullName evidence="1">2-isopropylmalate synthase</fullName>
        <ecNumber evidence="1">2.3.3.13</ecNumber>
    </recommendedName>
    <alternativeName>
        <fullName evidence="1">Alpha-IPM synthase</fullName>
    </alternativeName>
    <alternativeName>
        <fullName evidence="1">Alpha-isopropylmalate synthase</fullName>
    </alternativeName>
</protein>
<feature type="chain" id="PRO_1000149285" description="2-isopropylmalate synthase">
    <location>
        <begin position="1"/>
        <end position="523"/>
    </location>
</feature>
<feature type="domain" description="Pyruvate carboxyltransferase" evidence="1">
    <location>
        <begin position="5"/>
        <end position="267"/>
    </location>
</feature>
<feature type="region of interest" description="Regulatory domain" evidence="1">
    <location>
        <begin position="392"/>
        <end position="523"/>
    </location>
</feature>
<feature type="binding site" evidence="1">
    <location>
        <position position="14"/>
    </location>
    <ligand>
        <name>Mn(2+)</name>
        <dbReference type="ChEBI" id="CHEBI:29035"/>
    </ligand>
</feature>
<feature type="binding site" evidence="1">
    <location>
        <position position="202"/>
    </location>
    <ligand>
        <name>Mn(2+)</name>
        <dbReference type="ChEBI" id="CHEBI:29035"/>
    </ligand>
</feature>
<feature type="binding site" evidence="1">
    <location>
        <position position="204"/>
    </location>
    <ligand>
        <name>Mn(2+)</name>
        <dbReference type="ChEBI" id="CHEBI:29035"/>
    </ligand>
</feature>
<feature type="binding site" evidence="1">
    <location>
        <position position="238"/>
    </location>
    <ligand>
        <name>Mn(2+)</name>
        <dbReference type="ChEBI" id="CHEBI:29035"/>
    </ligand>
</feature>
<accession>A3QIP0</accession>
<dbReference type="EC" id="2.3.3.13" evidence="1"/>
<dbReference type="EMBL" id="CP000606">
    <property type="protein sequence ID" value="ABO25338.1"/>
    <property type="molecule type" value="Genomic_DNA"/>
</dbReference>
<dbReference type="RefSeq" id="WP_011867268.1">
    <property type="nucleotide sequence ID" value="NC_009092.1"/>
</dbReference>
<dbReference type="SMR" id="A3QIP0"/>
<dbReference type="STRING" id="323850.Shew_3472"/>
<dbReference type="KEGG" id="slo:Shew_3472"/>
<dbReference type="eggNOG" id="COG0119">
    <property type="taxonomic scope" value="Bacteria"/>
</dbReference>
<dbReference type="HOGENOM" id="CLU_022158_0_1_6"/>
<dbReference type="OrthoDB" id="9803573at2"/>
<dbReference type="UniPathway" id="UPA00048">
    <property type="reaction ID" value="UER00070"/>
</dbReference>
<dbReference type="Proteomes" id="UP000001558">
    <property type="component" value="Chromosome"/>
</dbReference>
<dbReference type="GO" id="GO:0005829">
    <property type="term" value="C:cytosol"/>
    <property type="evidence" value="ECO:0007669"/>
    <property type="project" value="TreeGrafter"/>
</dbReference>
<dbReference type="GO" id="GO:0003852">
    <property type="term" value="F:2-isopropylmalate synthase activity"/>
    <property type="evidence" value="ECO:0007669"/>
    <property type="project" value="UniProtKB-UniRule"/>
</dbReference>
<dbReference type="GO" id="GO:0003985">
    <property type="term" value="F:acetyl-CoA C-acetyltransferase activity"/>
    <property type="evidence" value="ECO:0007669"/>
    <property type="project" value="UniProtKB-UniRule"/>
</dbReference>
<dbReference type="GO" id="GO:0030145">
    <property type="term" value="F:manganese ion binding"/>
    <property type="evidence" value="ECO:0007669"/>
    <property type="project" value="UniProtKB-UniRule"/>
</dbReference>
<dbReference type="GO" id="GO:0009098">
    <property type="term" value="P:L-leucine biosynthetic process"/>
    <property type="evidence" value="ECO:0007669"/>
    <property type="project" value="UniProtKB-UniRule"/>
</dbReference>
<dbReference type="CDD" id="cd07940">
    <property type="entry name" value="DRE_TIM_IPMS"/>
    <property type="match status" value="1"/>
</dbReference>
<dbReference type="FunFam" id="1.10.238.260:FF:000001">
    <property type="entry name" value="2-isopropylmalate synthase"/>
    <property type="match status" value="1"/>
</dbReference>
<dbReference type="FunFam" id="3.20.20.70:FF:000010">
    <property type="entry name" value="2-isopropylmalate synthase"/>
    <property type="match status" value="1"/>
</dbReference>
<dbReference type="FunFam" id="3.30.160.270:FF:000001">
    <property type="entry name" value="2-isopropylmalate synthase"/>
    <property type="match status" value="1"/>
</dbReference>
<dbReference type="Gene3D" id="1.10.238.260">
    <property type="match status" value="1"/>
</dbReference>
<dbReference type="Gene3D" id="3.30.160.270">
    <property type="match status" value="1"/>
</dbReference>
<dbReference type="Gene3D" id="3.20.20.70">
    <property type="entry name" value="Aldolase class I"/>
    <property type="match status" value="1"/>
</dbReference>
<dbReference type="HAMAP" id="MF_01025">
    <property type="entry name" value="LeuA_type1"/>
    <property type="match status" value="1"/>
</dbReference>
<dbReference type="InterPro" id="IPR050073">
    <property type="entry name" value="2-IPM_HCS-like"/>
</dbReference>
<dbReference type="InterPro" id="IPR013709">
    <property type="entry name" value="2-isopropylmalate_synth_dimer"/>
</dbReference>
<dbReference type="InterPro" id="IPR002034">
    <property type="entry name" value="AIPM/Hcit_synth_CS"/>
</dbReference>
<dbReference type="InterPro" id="IPR013785">
    <property type="entry name" value="Aldolase_TIM"/>
</dbReference>
<dbReference type="InterPro" id="IPR054691">
    <property type="entry name" value="LeuA/HCS_post-cat"/>
</dbReference>
<dbReference type="InterPro" id="IPR036230">
    <property type="entry name" value="LeuA_allosteric_dom_sf"/>
</dbReference>
<dbReference type="InterPro" id="IPR005671">
    <property type="entry name" value="LeuA_bact_synth"/>
</dbReference>
<dbReference type="InterPro" id="IPR000891">
    <property type="entry name" value="PYR_CT"/>
</dbReference>
<dbReference type="NCBIfam" id="TIGR00973">
    <property type="entry name" value="leuA_bact"/>
    <property type="match status" value="1"/>
</dbReference>
<dbReference type="NCBIfam" id="NF002084">
    <property type="entry name" value="PRK00915.1-1"/>
    <property type="match status" value="1"/>
</dbReference>
<dbReference type="NCBIfam" id="NF002086">
    <property type="entry name" value="PRK00915.1-3"/>
    <property type="match status" value="1"/>
</dbReference>
<dbReference type="PANTHER" id="PTHR10277:SF9">
    <property type="entry name" value="2-ISOPROPYLMALATE SYNTHASE 1, CHLOROPLASTIC-RELATED"/>
    <property type="match status" value="1"/>
</dbReference>
<dbReference type="PANTHER" id="PTHR10277">
    <property type="entry name" value="HOMOCITRATE SYNTHASE-RELATED"/>
    <property type="match status" value="1"/>
</dbReference>
<dbReference type="Pfam" id="PF22617">
    <property type="entry name" value="HCS_D2"/>
    <property type="match status" value="1"/>
</dbReference>
<dbReference type="Pfam" id="PF00682">
    <property type="entry name" value="HMGL-like"/>
    <property type="match status" value="1"/>
</dbReference>
<dbReference type="Pfam" id="PF08502">
    <property type="entry name" value="LeuA_dimer"/>
    <property type="match status" value="1"/>
</dbReference>
<dbReference type="SMART" id="SM00917">
    <property type="entry name" value="LeuA_dimer"/>
    <property type="match status" value="1"/>
</dbReference>
<dbReference type="SUPFAM" id="SSF110921">
    <property type="entry name" value="2-isopropylmalate synthase LeuA, allosteric (dimerisation) domain"/>
    <property type="match status" value="1"/>
</dbReference>
<dbReference type="SUPFAM" id="SSF51569">
    <property type="entry name" value="Aldolase"/>
    <property type="match status" value="1"/>
</dbReference>
<dbReference type="PROSITE" id="PS00815">
    <property type="entry name" value="AIPM_HOMOCIT_SYNTH_1"/>
    <property type="match status" value="1"/>
</dbReference>
<dbReference type="PROSITE" id="PS00816">
    <property type="entry name" value="AIPM_HOMOCIT_SYNTH_2"/>
    <property type="match status" value="1"/>
</dbReference>
<dbReference type="PROSITE" id="PS50991">
    <property type="entry name" value="PYR_CT"/>
    <property type="match status" value="1"/>
</dbReference>